<protein>
    <recommendedName>
        <fullName>High molecular weight form of myosin-1</fullName>
    </recommendedName>
    <alternativeName>
        <fullName>High molecular weight form of myosin I</fullName>
        <shortName>HMWMI</shortName>
    </alternativeName>
</protein>
<dbReference type="EMBL" id="M60954">
    <property type="protein sequence ID" value="AAA27709.1"/>
    <property type="molecule type" value="Genomic_DNA"/>
</dbReference>
<dbReference type="VEuPathDB" id="AmoebaDB:ACA1_024380"/>
<dbReference type="GO" id="GO:0005737">
    <property type="term" value="C:cytoplasm"/>
    <property type="evidence" value="ECO:0007669"/>
    <property type="project" value="TreeGrafter"/>
</dbReference>
<dbReference type="GO" id="GO:0016020">
    <property type="term" value="C:membrane"/>
    <property type="evidence" value="ECO:0007669"/>
    <property type="project" value="TreeGrafter"/>
</dbReference>
<dbReference type="GO" id="GO:0016459">
    <property type="term" value="C:myosin complex"/>
    <property type="evidence" value="ECO:0007669"/>
    <property type="project" value="UniProtKB-KW"/>
</dbReference>
<dbReference type="GO" id="GO:0051015">
    <property type="term" value="F:actin filament binding"/>
    <property type="evidence" value="ECO:0007669"/>
    <property type="project" value="TreeGrafter"/>
</dbReference>
<dbReference type="GO" id="GO:0005524">
    <property type="term" value="F:ATP binding"/>
    <property type="evidence" value="ECO:0007669"/>
    <property type="project" value="UniProtKB-KW"/>
</dbReference>
<dbReference type="GO" id="GO:0000146">
    <property type="term" value="F:microfilament motor activity"/>
    <property type="evidence" value="ECO:0007669"/>
    <property type="project" value="TreeGrafter"/>
</dbReference>
<dbReference type="GO" id="GO:0007015">
    <property type="term" value="P:actin filament organization"/>
    <property type="evidence" value="ECO:0007669"/>
    <property type="project" value="TreeGrafter"/>
</dbReference>
<dbReference type="GO" id="GO:0022607">
    <property type="term" value="P:cellular component assembly"/>
    <property type="evidence" value="ECO:0007669"/>
    <property type="project" value="UniProtKB-ARBA"/>
</dbReference>
<dbReference type="CDD" id="cd14872">
    <property type="entry name" value="MYSc_Myo4"/>
    <property type="match status" value="1"/>
</dbReference>
<dbReference type="CDD" id="cd00174">
    <property type="entry name" value="SH3"/>
    <property type="match status" value="1"/>
</dbReference>
<dbReference type="Gene3D" id="1.10.10.820">
    <property type="match status" value="1"/>
</dbReference>
<dbReference type="Gene3D" id="1.20.5.4820">
    <property type="match status" value="1"/>
</dbReference>
<dbReference type="Gene3D" id="1.20.58.530">
    <property type="match status" value="1"/>
</dbReference>
<dbReference type="Gene3D" id="3.40.850.10">
    <property type="entry name" value="Kinesin motor domain"/>
    <property type="match status" value="1"/>
</dbReference>
<dbReference type="Gene3D" id="1.20.120.720">
    <property type="entry name" value="Myosin VI head, motor domain, U50 subdomain"/>
    <property type="match status" value="1"/>
</dbReference>
<dbReference type="Gene3D" id="1.25.40.530">
    <property type="entry name" value="MyTH4 domain"/>
    <property type="match status" value="1"/>
</dbReference>
<dbReference type="Gene3D" id="2.30.30.40">
    <property type="entry name" value="SH3 Domains"/>
    <property type="match status" value="1"/>
</dbReference>
<dbReference type="InterPro" id="IPR036961">
    <property type="entry name" value="Kinesin_motor_dom_sf"/>
</dbReference>
<dbReference type="InterPro" id="IPR001609">
    <property type="entry name" value="Myosin_head_motor_dom-like"/>
</dbReference>
<dbReference type="InterPro" id="IPR000857">
    <property type="entry name" value="MyTH4_dom"/>
</dbReference>
<dbReference type="InterPro" id="IPR038185">
    <property type="entry name" value="MyTH4_dom_sf"/>
</dbReference>
<dbReference type="InterPro" id="IPR027417">
    <property type="entry name" value="P-loop_NTPase"/>
</dbReference>
<dbReference type="InterPro" id="IPR036028">
    <property type="entry name" value="SH3-like_dom_sf"/>
</dbReference>
<dbReference type="InterPro" id="IPR001452">
    <property type="entry name" value="SH3_domain"/>
</dbReference>
<dbReference type="PANTHER" id="PTHR13140:SF706">
    <property type="entry name" value="DILUTE CLASS UNCONVENTIONAL MYOSIN, ISOFORM C"/>
    <property type="match status" value="1"/>
</dbReference>
<dbReference type="PANTHER" id="PTHR13140">
    <property type="entry name" value="MYOSIN"/>
    <property type="match status" value="1"/>
</dbReference>
<dbReference type="Pfam" id="PF00063">
    <property type="entry name" value="Myosin_head"/>
    <property type="match status" value="1"/>
</dbReference>
<dbReference type="Pfam" id="PF00784">
    <property type="entry name" value="MyTH4"/>
    <property type="match status" value="1"/>
</dbReference>
<dbReference type="Pfam" id="PF14604">
    <property type="entry name" value="SH3_9"/>
    <property type="match status" value="1"/>
</dbReference>
<dbReference type="PRINTS" id="PR00193">
    <property type="entry name" value="MYOSINHEAVY"/>
</dbReference>
<dbReference type="SMART" id="SM00242">
    <property type="entry name" value="MYSc"/>
    <property type="match status" value="1"/>
</dbReference>
<dbReference type="SMART" id="SM00139">
    <property type="entry name" value="MyTH4"/>
    <property type="match status" value="1"/>
</dbReference>
<dbReference type="SMART" id="SM00326">
    <property type="entry name" value="SH3"/>
    <property type="match status" value="1"/>
</dbReference>
<dbReference type="SUPFAM" id="SSF52540">
    <property type="entry name" value="P-loop containing nucleoside triphosphate hydrolases"/>
    <property type="match status" value="1"/>
</dbReference>
<dbReference type="SUPFAM" id="SSF50044">
    <property type="entry name" value="SH3-domain"/>
    <property type="match status" value="1"/>
</dbReference>
<dbReference type="PROSITE" id="PS50096">
    <property type="entry name" value="IQ"/>
    <property type="match status" value="1"/>
</dbReference>
<dbReference type="PROSITE" id="PS51456">
    <property type="entry name" value="MYOSIN_MOTOR"/>
    <property type="match status" value="1"/>
</dbReference>
<dbReference type="PROSITE" id="PS51016">
    <property type="entry name" value="MYTH4"/>
    <property type="match status" value="1"/>
</dbReference>
<dbReference type="PROSITE" id="PS50002">
    <property type="entry name" value="SH3"/>
    <property type="match status" value="1"/>
</dbReference>
<accession>P47808</accession>
<proteinExistence type="inferred from homology"/>
<name>MYSH_ACACA</name>
<keyword id="KW-0009">Actin-binding</keyword>
<keyword id="KW-0067">ATP-binding</keyword>
<keyword id="KW-0488">Methylation</keyword>
<keyword id="KW-0505">Motor protein</keyword>
<keyword id="KW-0518">Myosin</keyword>
<keyword id="KW-0547">Nucleotide-binding</keyword>
<keyword id="KW-0728">SH3 domain</keyword>
<organism>
    <name type="scientific">Acanthamoeba castellanii</name>
    <name type="common">Amoeba</name>
    <dbReference type="NCBI Taxonomy" id="5755"/>
    <lineage>
        <taxon>Eukaryota</taxon>
        <taxon>Amoebozoa</taxon>
        <taxon>Discosea</taxon>
        <taxon>Longamoebia</taxon>
        <taxon>Centramoebida</taxon>
        <taxon>Acanthamoebidae</taxon>
        <taxon>Acanthamoeba</taxon>
    </lineage>
</organism>
<evidence type="ECO:0000255" key="1"/>
<evidence type="ECO:0000255" key="2">
    <source>
        <dbReference type="PROSITE-ProRule" id="PRU00116"/>
    </source>
</evidence>
<evidence type="ECO:0000255" key="3">
    <source>
        <dbReference type="PROSITE-ProRule" id="PRU00192"/>
    </source>
</evidence>
<evidence type="ECO:0000255" key="4">
    <source>
        <dbReference type="PROSITE-ProRule" id="PRU00359"/>
    </source>
</evidence>
<evidence type="ECO:0000255" key="5">
    <source>
        <dbReference type="PROSITE-ProRule" id="PRU00782"/>
    </source>
</evidence>
<evidence type="ECO:0000256" key="6">
    <source>
        <dbReference type="SAM" id="MobiDB-lite"/>
    </source>
</evidence>
<evidence type="ECO:0000305" key="7"/>
<sequence>MHFLFFFANRQFLSLKCPQAEFVWIPHPVHGYITGKFIQEDYGGTSYCQTEEGESLSVACAPSQLAKVAKSVLDKSVDDLVQMDDINEAMIVHNLRKRFKNDQIYTNIGTILISVNPFKRLPLYTPTVMDQYMHKVPKEMPPHTYNIADDAYRAMIDNRMNQSILISGESGAGKTECTKQCLTYFAELAGSTNGVEQNILLANPILESFGNAKTLRNNSSRFGKWVEIHFDQKGSICGASTINHLLEKSRVVYQIKGERNFRIVATELVKAPPRSRGGGGSSPARPESFKFLSQSGCIDVEGVDDVKEFEERVLCHGQARVRVQFSEDDINNCMELISAILHLGNFEFVSGQGKNVETSTVANREEVKIVATLLKVDPATLEQNVTSKLMEIKGCDPTRIPLTPVQATDATNALAKAIYSKLFDWLVKKINESMEPQKGAKTTTIGVLDIFGFEIFDKNSFEQLCINFTNEKLQQHFNQYTFKLEEKLYQSEEVKYEHITFIDNQPVLDLIEKKQPQGLMLVLDEQISIPKSSDATFFIKANQTQAARSTQLRGGEDSRTDFIIKHYAGDVIYDSTGMLEKNKDTLQKDLLVLSESSKQKLMKLLFPPSEGDQKTSKVTLGGQFRKQLDSLMTALNATEPHYIRCIKPNSEKQADLFHGFMSLQQLRYAGVFEAVRIRQTGYPFRYSHENFLKRYGFLVKDIHKRYGPNLKQNCDLLLKSMKGDCXSKVQVGKTRVLYRAPEQRGLELQRNIAVERVTIQIQAGVRRMFARRLYKRMRAIKPVLLNAIKSRSLSVLEQAIDAAKDIEFDMKLIRDCKELRSVILKEMEITKKLTDYIGAPPNHKTYLQVEPLYAQLCAVLTEAESINYSTPLVETGQQIKYMIAQRVETREQLKQAVDGAVRVDLEAAIARAEQIGLEESEPTLAAGRQELQRIYREEELVAELLNALAVGMAMRTSETTWDHAAIDAHTLGSAIYAAESFGFRTEQGRLTLDEAKVIVEVRQHLAADDYESLSMTLKKATTTLNKNSMSQSTKTEIDEAYEELSHNTAVNDLIEKVVQAIQDHDQEMLDYGVQQADSLRITDRPEMMQATELLNRIVNARALLREGITNVDQAQLETALADAASFAYTREEVPTAQQLLDRIYVINHDADVGLYYMEKEPLERAWAGAQEINLKTAQIDEVRNVLANDEQKFIQEQLKTANRLGDQARAIRLNIKLKEIFFGQFGKMFVFEQFGGLRKPEDFAKAKLLGREALKLGMFKWTKSPIPTSLTTLDQLAVKSATRLFKNVLGFMGDRPLPYPNALAQDLLEQCLAAPELRNEVYCQIIKQLTENPSPQSVTKGWQLMRCCLQTFPPSEEFANCLEMFLAAKGKDDKYIEMLHDTQYGDKRTSAPNVEQILAAKQYVTRIDLNQSTQVDTSVVPQGFVPEKLIADDTEGVIRAGSRPAQARAQPGQQAQPAGAARQQAAAPVQAAAATASYDYGQQQQQQQQGYDQQQQAYGGGADYGQQQQQQDLPAEPTEEYKQVEVVYDYDGGGDAQRLVLVKGAIITVIKEYEGWAYGSTDDGQVGLYPINYTRPI</sequence>
<comment type="subunit">
    <text>Myosin I heavy chain is single-headed.</text>
</comment>
<comment type="similarity">
    <text evidence="7">Belongs to the TRAFAC class myosin-kinesin ATPase superfamily. Myosin family.</text>
</comment>
<reference key="1">
    <citation type="journal article" date="1990" name="J. Biol. Chem.">
        <title>A new Acanthamoeba myosin heavy chain. Cloning of the gene and immunological identification of the polypeptide.</title>
        <authorList>
            <person name="Horowitz J.A."/>
            <person name="Hammer J.A. III"/>
        </authorList>
    </citation>
    <scope>NUCLEOTIDE SEQUENCE [GENOMIC DNA]</scope>
</reference>
<feature type="chain" id="PRO_0000123363" description="High molecular weight form of myosin-1">
    <location>
        <begin position="1"/>
        <end position="1577"/>
    </location>
</feature>
<feature type="domain" description="Myosin motor" evidence="5">
    <location>
        <begin position="75"/>
        <end position="751"/>
    </location>
</feature>
<feature type="domain" description="IQ" evidence="2">
    <location>
        <begin position="755"/>
        <end position="782"/>
    </location>
</feature>
<feature type="domain" description="MyTH4" evidence="4">
    <location>
        <begin position="1261"/>
        <end position="1401"/>
    </location>
</feature>
<feature type="domain" description="SH3" evidence="3">
    <location>
        <begin position="1519"/>
        <end position="1577"/>
    </location>
</feature>
<feature type="region of interest" description="Actin-binding" evidence="1">
    <location>
        <begin position="628"/>
        <end position="650"/>
    </location>
</feature>
<feature type="region of interest" description="Actin-binding" evidence="1">
    <location>
        <begin position="730"/>
        <end position="744"/>
    </location>
</feature>
<feature type="region of interest" description="Disordered" evidence="6">
    <location>
        <begin position="1442"/>
        <end position="1466"/>
    </location>
</feature>
<feature type="region of interest" description="Disordered" evidence="6">
    <location>
        <begin position="1483"/>
        <end position="1516"/>
    </location>
</feature>
<feature type="compositionally biased region" description="Low complexity" evidence="6">
    <location>
        <begin position="1444"/>
        <end position="1466"/>
    </location>
</feature>
<feature type="compositionally biased region" description="Low complexity" evidence="6">
    <location>
        <begin position="1483"/>
        <end position="1497"/>
    </location>
</feature>
<feature type="binding site" evidence="1">
    <location>
        <begin position="168"/>
        <end position="175"/>
    </location>
    <ligand>
        <name>ATP</name>
        <dbReference type="ChEBI" id="CHEBI:30616"/>
    </ligand>
</feature>
<feature type="modified residue" description="N6,N6,N6-trimethyllysine" evidence="1">
    <location>
        <position position="119"/>
    </location>
</feature>